<accession>B2UV79</accession>
<evidence type="ECO:0000255" key="1">
    <source>
        <dbReference type="HAMAP-Rule" id="MF_01320"/>
    </source>
</evidence>
<evidence type="ECO:0000256" key="2">
    <source>
        <dbReference type="SAM" id="MobiDB-lite"/>
    </source>
</evidence>
<evidence type="ECO:0000305" key="3"/>
<protein>
    <recommendedName>
        <fullName evidence="1">Large ribosomal subunit protein uL2</fullName>
    </recommendedName>
    <alternativeName>
        <fullName evidence="3">50S ribosomal protein L2</fullName>
    </alternativeName>
</protein>
<feature type="chain" id="PRO_1000141563" description="Large ribosomal subunit protein uL2">
    <location>
        <begin position="1"/>
        <end position="278"/>
    </location>
</feature>
<feature type="region of interest" description="Disordered" evidence="2">
    <location>
        <begin position="212"/>
        <end position="278"/>
    </location>
</feature>
<feature type="compositionally biased region" description="Basic residues" evidence="2">
    <location>
        <begin position="257"/>
        <end position="278"/>
    </location>
</feature>
<reference key="1">
    <citation type="submission" date="2008-05" db="EMBL/GenBank/DDBJ databases">
        <title>Genome sequence of Helicobacter pylori from the remote Amazon: traces of Asian ancestry of the first Americans.</title>
        <authorList>
            <person name="Kersulyte D."/>
            <person name="Kalia A."/>
            <person name="Gilman R.H."/>
            <person name="Berg D.E."/>
        </authorList>
    </citation>
    <scope>NUCLEOTIDE SEQUENCE [LARGE SCALE GENOMIC DNA]</scope>
    <source>
        <strain>Shi470</strain>
    </source>
</reference>
<sequence length="278" mass="30456">MAIKTYKPYTPSRRFMSVLDSKDITAKSSVKGLLTKLKATAGRNNNGRITSRHKERGAKKLYRIIDFKRNKYNIEGKVAAIEYDPYRNARIALVVYPDGDKRYILQPSGLKVGDSVIAAEGGLDIKVGFAMKLKNIPIGTVVHNIEMHPGAGGQLARSAGMSAQIMGRENKYTILRMPSSEMRYILSECMASVGVVGNEDFINVSIGKAGRNRHRGIRPQTRGSAMNPVDHPHGGGEGKTGTSGHPVSPWGTPAKGYKTRKKKASDKLIISRKKHKKG</sequence>
<dbReference type="EMBL" id="CP001072">
    <property type="protein sequence ID" value="ACD48761.1"/>
    <property type="molecule type" value="Genomic_DNA"/>
</dbReference>
<dbReference type="RefSeq" id="WP_000985812.1">
    <property type="nucleotide sequence ID" value="NC_010698.2"/>
</dbReference>
<dbReference type="SMR" id="B2UV79"/>
<dbReference type="KEGG" id="hps:HPSH_06805"/>
<dbReference type="HOGENOM" id="CLU_036235_2_1_7"/>
<dbReference type="GO" id="GO:0015934">
    <property type="term" value="C:large ribosomal subunit"/>
    <property type="evidence" value="ECO:0007669"/>
    <property type="project" value="InterPro"/>
</dbReference>
<dbReference type="GO" id="GO:0019843">
    <property type="term" value="F:rRNA binding"/>
    <property type="evidence" value="ECO:0007669"/>
    <property type="project" value="UniProtKB-UniRule"/>
</dbReference>
<dbReference type="GO" id="GO:0003735">
    <property type="term" value="F:structural constituent of ribosome"/>
    <property type="evidence" value="ECO:0007669"/>
    <property type="project" value="InterPro"/>
</dbReference>
<dbReference type="GO" id="GO:0016740">
    <property type="term" value="F:transferase activity"/>
    <property type="evidence" value="ECO:0007669"/>
    <property type="project" value="InterPro"/>
</dbReference>
<dbReference type="GO" id="GO:0002181">
    <property type="term" value="P:cytoplasmic translation"/>
    <property type="evidence" value="ECO:0007669"/>
    <property type="project" value="TreeGrafter"/>
</dbReference>
<dbReference type="FunFam" id="2.30.30.30:FF:000001">
    <property type="entry name" value="50S ribosomal protein L2"/>
    <property type="match status" value="1"/>
</dbReference>
<dbReference type="FunFam" id="2.40.50.140:FF:000003">
    <property type="entry name" value="50S ribosomal protein L2"/>
    <property type="match status" value="1"/>
</dbReference>
<dbReference type="FunFam" id="4.10.950.10:FF:000001">
    <property type="entry name" value="50S ribosomal protein L2"/>
    <property type="match status" value="1"/>
</dbReference>
<dbReference type="Gene3D" id="2.30.30.30">
    <property type="match status" value="1"/>
</dbReference>
<dbReference type="Gene3D" id="2.40.50.140">
    <property type="entry name" value="Nucleic acid-binding proteins"/>
    <property type="match status" value="1"/>
</dbReference>
<dbReference type="Gene3D" id="4.10.950.10">
    <property type="entry name" value="Ribosomal protein L2, domain 3"/>
    <property type="match status" value="1"/>
</dbReference>
<dbReference type="HAMAP" id="MF_01320_B">
    <property type="entry name" value="Ribosomal_uL2_B"/>
    <property type="match status" value="1"/>
</dbReference>
<dbReference type="InterPro" id="IPR012340">
    <property type="entry name" value="NA-bd_OB-fold"/>
</dbReference>
<dbReference type="InterPro" id="IPR014722">
    <property type="entry name" value="Rib_uL2_dom2"/>
</dbReference>
<dbReference type="InterPro" id="IPR002171">
    <property type="entry name" value="Ribosomal_uL2"/>
</dbReference>
<dbReference type="InterPro" id="IPR005880">
    <property type="entry name" value="Ribosomal_uL2_bac/org-type"/>
</dbReference>
<dbReference type="InterPro" id="IPR022669">
    <property type="entry name" value="Ribosomal_uL2_C"/>
</dbReference>
<dbReference type="InterPro" id="IPR022671">
    <property type="entry name" value="Ribosomal_uL2_CS"/>
</dbReference>
<dbReference type="InterPro" id="IPR014726">
    <property type="entry name" value="Ribosomal_uL2_dom3"/>
</dbReference>
<dbReference type="InterPro" id="IPR022666">
    <property type="entry name" value="Ribosomal_uL2_RNA-bd_dom"/>
</dbReference>
<dbReference type="InterPro" id="IPR008991">
    <property type="entry name" value="Translation_prot_SH3-like_sf"/>
</dbReference>
<dbReference type="NCBIfam" id="TIGR01171">
    <property type="entry name" value="rplB_bact"/>
    <property type="match status" value="1"/>
</dbReference>
<dbReference type="PANTHER" id="PTHR13691:SF5">
    <property type="entry name" value="LARGE RIBOSOMAL SUBUNIT PROTEIN UL2M"/>
    <property type="match status" value="1"/>
</dbReference>
<dbReference type="PANTHER" id="PTHR13691">
    <property type="entry name" value="RIBOSOMAL PROTEIN L2"/>
    <property type="match status" value="1"/>
</dbReference>
<dbReference type="Pfam" id="PF00181">
    <property type="entry name" value="Ribosomal_L2"/>
    <property type="match status" value="1"/>
</dbReference>
<dbReference type="Pfam" id="PF03947">
    <property type="entry name" value="Ribosomal_L2_C"/>
    <property type="match status" value="1"/>
</dbReference>
<dbReference type="PIRSF" id="PIRSF002158">
    <property type="entry name" value="Ribosomal_L2"/>
    <property type="match status" value="1"/>
</dbReference>
<dbReference type="SMART" id="SM01383">
    <property type="entry name" value="Ribosomal_L2"/>
    <property type="match status" value="1"/>
</dbReference>
<dbReference type="SMART" id="SM01382">
    <property type="entry name" value="Ribosomal_L2_C"/>
    <property type="match status" value="1"/>
</dbReference>
<dbReference type="SUPFAM" id="SSF50249">
    <property type="entry name" value="Nucleic acid-binding proteins"/>
    <property type="match status" value="1"/>
</dbReference>
<dbReference type="SUPFAM" id="SSF50104">
    <property type="entry name" value="Translation proteins SH3-like domain"/>
    <property type="match status" value="1"/>
</dbReference>
<dbReference type="PROSITE" id="PS00467">
    <property type="entry name" value="RIBOSOMAL_L2"/>
    <property type="match status" value="1"/>
</dbReference>
<comment type="function">
    <text evidence="1">One of the primary rRNA binding proteins. Required for association of the 30S and 50S subunits to form the 70S ribosome, for tRNA binding and peptide bond formation. It has been suggested to have peptidyltransferase activity; this is somewhat controversial. Makes several contacts with the 16S rRNA in the 70S ribosome.</text>
</comment>
<comment type="subunit">
    <text evidence="1">Part of the 50S ribosomal subunit. Forms a bridge to the 30S subunit in the 70S ribosome.</text>
</comment>
<comment type="similarity">
    <text evidence="1">Belongs to the universal ribosomal protein uL2 family.</text>
</comment>
<gene>
    <name evidence="1" type="primary">rplB</name>
    <name type="ordered locus">HPSH_06805</name>
</gene>
<keyword id="KW-0687">Ribonucleoprotein</keyword>
<keyword id="KW-0689">Ribosomal protein</keyword>
<keyword id="KW-0694">RNA-binding</keyword>
<keyword id="KW-0699">rRNA-binding</keyword>
<name>RL2_HELPS</name>
<proteinExistence type="inferred from homology"/>
<organism>
    <name type="scientific">Helicobacter pylori (strain Shi470)</name>
    <dbReference type="NCBI Taxonomy" id="512562"/>
    <lineage>
        <taxon>Bacteria</taxon>
        <taxon>Pseudomonadati</taxon>
        <taxon>Campylobacterota</taxon>
        <taxon>Epsilonproteobacteria</taxon>
        <taxon>Campylobacterales</taxon>
        <taxon>Helicobacteraceae</taxon>
        <taxon>Helicobacter</taxon>
    </lineage>
</organism>